<proteinExistence type="inferred from homology"/>
<sequence length="138" mass="15515">MIVNSCQLNVVSVEKSIFSGVIKKIYVMGVEGELGIFPGHSPLLTLIKPGLLKIFQVYNNEYLYLSGGILEVQPTVITILADVAIRAKDLDEKKVRDSKRLSEEKIKKMRHGDVDYIKISMEISKAIAQLRLIELTKK</sequence>
<evidence type="ECO:0000255" key="1">
    <source>
        <dbReference type="HAMAP-Rule" id="MF_00530"/>
    </source>
</evidence>
<accession>Q7VQV5</accession>
<reference key="1">
    <citation type="journal article" date="2003" name="Proc. Natl. Acad. Sci. U.S.A.">
        <title>The genome sequence of Blochmannia floridanus: comparative analysis of reduced genomes.</title>
        <authorList>
            <person name="Gil R."/>
            <person name="Silva F.J."/>
            <person name="Zientz E."/>
            <person name="Delmotte F."/>
            <person name="Gonzalez-Candelas F."/>
            <person name="Latorre A."/>
            <person name="Rausell C."/>
            <person name="Kamerbeek J."/>
            <person name="Gadau J."/>
            <person name="Hoelldobler B."/>
            <person name="van Ham R.C.H.J."/>
            <person name="Gross R."/>
            <person name="Moya A."/>
        </authorList>
    </citation>
    <scope>NUCLEOTIDE SEQUENCE [LARGE SCALE GENOMIC DNA]</scope>
</reference>
<comment type="function">
    <text evidence="1">Produces ATP from ADP in the presence of a proton gradient across the membrane.</text>
</comment>
<comment type="subunit">
    <text>F-type ATPases have 2 components, CF(1) - the catalytic core - and CF(0) - the membrane proton channel. CF(1) has five subunits: alpha(3), beta(3), gamma(1), delta(1), epsilon(1). CF(0) has three main subunits: a, b and c.</text>
</comment>
<comment type="subcellular location">
    <subcellularLocation>
        <location evidence="1">Cell inner membrane</location>
        <topology evidence="1">Peripheral membrane protein</topology>
    </subcellularLocation>
</comment>
<comment type="similarity">
    <text evidence="1">Belongs to the ATPase epsilon chain family.</text>
</comment>
<feature type="chain" id="PRO_0000188117" description="ATP synthase epsilon chain">
    <location>
        <begin position="1"/>
        <end position="138"/>
    </location>
</feature>
<keyword id="KW-0066">ATP synthesis</keyword>
<keyword id="KW-0997">Cell inner membrane</keyword>
<keyword id="KW-1003">Cell membrane</keyword>
<keyword id="KW-0139">CF(1)</keyword>
<keyword id="KW-0375">Hydrogen ion transport</keyword>
<keyword id="KW-0406">Ion transport</keyword>
<keyword id="KW-0472">Membrane</keyword>
<keyword id="KW-1185">Reference proteome</keyword>
<keyword id="KW-0813">Transport</keyword>
<gene>
    <name evidence="1" type="primary">atpC</name>
    <name type="ordered locus">Bfl009</name>
</gene>
<dbReference type="EMBL" id="BX248583">
    <property type="protein sequence ID" value="CAD83537.1"/>
    <property type="molecule type" value="Genomic_DNA"/>
</dbReference>
<dbReference type="SMR" id="Q7VQV5"/>
<dbReference type="STRING" id="203907.Bfl009"/>
<dbReference type="KEGG" id="bfl:Bfl009"/>
<dbReference type="eggNOG" id="COG0355">
    <property type="taxonomic scope" value="Bacteria"/>
</dbReference>
<dbReference type="HOGENOM" id="CLU_084338_2_0_6"/>
<dbReference type="OrthoDB" id="9791445at2"/>
<dbReference type="Proteomes" id="UP000002192">
    <property type="component" value="Chromosome"/>
</dbReference>
<dbReference type="GO" id="GO:0005886">
    <property type="term" value="C:plasma membrane"/>
    <property type="evidence" value="ECO:0007669"/>
    <property type="project" value="UniProtKB-SubCell"/>
</dbReference>
<dbReference type="GO" id="GO:0045259">
    <property type="term" value="C:proton-transporting ATP synthase complex"/>
    <property type="evidence" value="ECO:0007669"/>
    <property type="project" value="UniProtKB-KW"/>
</dbReference>
<dbReference type="GO" id="GO:0005524">
    <property type="term" value="F:ATP binding"/>
    <property type="evidence" value="ECO:0007669"/>
    <property type="project" value="UniProtKB-UniRule"/>
</dbReference>
<dbReference type="GO" id="GO:0046933">
    <property type="term" value="F:proton-transporting ATP synthase activity, rotational mechanism"/>
    <property type="evidence" value="ECO:0007669"/>
    <property type="project" value="UniProtKB-UniRule"/>
</dbReference>
<dbReference type="CDD" id="cd12152">
    <property type="entry name" value="F1-ATPase_delta"/>
    <property type="match status" value="1"/>
</dbReference>
<dbReference type="FunFam" id="2.60.15.10:FF:000001">
    <property type="entry name" value="ATP synthase epsilon chain"/>
    <property type="match status" value="1"/>
</dbReference>
<dbReference type="Gene3D" id="1.20.5.440">
    <property type="entry name" value="ATP synthase delta/epsilon subunit, C-terminal domain"/>
    <property type="match status" value="1"/>
</dbReference>
<dbReference type="Gene3D" id="2.60.15.10">
    <property type="entry name" value="F0F1 ATP synthase delta/epsilon subunit, N-terminal"/>
    <property type="match status" value="1"/>
</dbReference>
<dbReference type="HAMAP" id="MF_00530">
    <property type="entry name" value="ATP_synth_epsil_bac"/>
    <property type="match status" value="1"/>
</dbReference>
<dbReference type="InterPro" id="IPR036794">
    <property type="entry name" value="ATP_F1_dsu/esu_C_sf"/>
</dbReference>
<dbReference type="InterPro" id="IPR001469">
    <property type="entry name" value="ATP_synth_F1_dsu/esu"/>
</dbReference>
<dbReference type="InterPro" id="IPR020546">
    <property type="entry name" value="ATP_synth_F1_dsu/esu_N"/>
</dbReference>
<dbReference type="InterPro" id="IPR020547">
    <property type="entry name" value="ATP_synth_F1_esu_C"/>
</dbReference>
<dbReference type="InterPro" id="IPR036771">
    <property type="entry name" value="ATPsynth_dsu/esu_N"/>
</dbReference>
<dbReference type="NCBIfam" id="TIGR01216">
    <property type="entry name" value="ATP_synt_epsi"/>
    <property type="match status" value="1"/>
</dbReference>
<dbReference type="NCBIfam" id="NF001847">
    <property type="entry name" value="PRK00571.1-4"/>
    <property type="match status" value="1"/>
</dbReference>
<dbReference type="PANTHER" id="PTHR13822">
    <property type="entry name" value="ATP SYNTHASE DELTA/EPSILON CHAIN"/>
    <property type="match status" value="1"/>
</dbReference>
<dbReference type="PANTHER" id="PTHR13822:SF10">
    <property type="entry name" value="ATP SYNTHASE EPSILON CHAIN, CHLOROPLASTIC"/>
    <property type="match status" value="1"/>
</dbReference>
<dbReference type="Pfam" id="PF00401">
    <property type="entry name" value="ATP-synt_DE"/>
    <property type="match status" value="1"/>
</dbReference>
<dbReference type="Pfam" id="PF02823">
    <property type="entry name" value="ATP-synt_DE_N"/>
    <property type="match status" value="1"/>
</dbReference>
<dbReference type="SUPFAM" id="SSF46604">
    <property type="entry name" value="Epsilon subunit of F1F0-ATP synthase C-terminal domain"/>
    <property type="match status" value="1"/>
</dbReference>
<dbReference type="SUPFAM" id="SSF51344">
    <property type="entry name" value="Epsilon subunit of F1F0-ATP synthase N-terminal domain"/>
    <property type="match status" value="1"/>
</dbReference>
<name>ATPE_BLOFL</name>
<protein>
    <recommendedName>
        <fullName evidence="1">ATP synthase epsilon chain</fullName>
    </recommendedName>
    <alternativeName>
        <fullName evidence="1">ATP synthase F1 sector epsilon subunit</fullName>
    </alternativeName>
    <alternativeName>
        <fullName evidence="1">F-ATPase epsilon subunit</fullName>
    </alternativeName>
</protein>
<organism>
    <name type="scientific">Blochmanniella floridana</name>
    <dbReference type="NCBI Taxonomy" id="203907"/>
    <lineage>
        <taxon>Bacteria</taxon>
        <taxon>Pseudomonadati</taxon>
        <taxon>Pseudomonadota</taxon>
        <taxon>Gammaproteobacteria</taxon>
        <taxon>Enterobacterales</taxon>
        <taxon>Enterobacteriaceae</taxon>
        <taxon>ant endosymbionts</taxon>
        <taxon>Candidatus Blochmanniella</taxon>
    </lineage>
</organism>